<gene>
    <name evidence="1" type="primary">hfq</name>
    <name type="ordered locus">ASA_3369</name>
</gene>
<keyword id="KW-0694">RNA-binding</keyword>
<keyword id="KW-0346">Stress response</keyword>
<sequence>MAKGQSLQDPFLNALRRERIPVSIYLVNGIKLQGQIESFDQFVILLKNTVSQMVYKHAISTVVPARAVNHHQHVPGAAGEEQGEAEA</sequence>
<evidence type="ECO:0000255" key="1">
    <source>
        <dbReference type="HAMAP-Rule" id="MF_00436"/>
    </source>
</evidence>
<evidence type="ECO:0000255" key="2">
    <source>
        <dbReference type="PROSITE-ProRule" id="PRU01346"/>
    </source>
</evidence>
<dbReference type="EMBL" id="CP000644">
    <property type="protein sequence ID" value="ABO91347.1"/>
    <property type="molecule type" value="Genomic_DNA"/>
</dbReference>
<dbReference type="RefSeq" id="WP_005311664.1">
    <property type="nucleotide sequence ID" value="NC_009348.1"/>
</dbReference>
<dbReference type="SMR" id="A4SR25"/>
<dbReference type="STRING" id="29491.GCA_000820065_03760"/>
<dbReference type="GeneID" id="92724692"/>
<dbReference type="KEGG" id="asa:ASA_3369"/>
<dbReference type="eggNOG" id="COG1923">
    <property type="taxonomic scope" value="Bacteria"/>
</dbReference>
<dbReference type="HOGENOM" id="CLU_113688_2_2_6"/>
<dbReference type="Proteomes" id="UP000000225">
    <property type="component" value="Chromosome"/>
</dbReference>
<dbReference type="GO" id="GO:0005829">
    <property type="term" value="C:cytosol"/>
    <property type="evidence" value="ECO:0007669"/>
    <property type="project" value="TreeGrafter"/>
</dbReference>
<dbReference type="GO" id="GO:0003723">
    <property type="term" value="F:RNA binding"/>
    <property type="evidence" value="ECO:0007669"/>
    <property type="project" value="UniProtKB-UniRule"/>
</dbReference>
<dbReference type="GO" id="GO:0006355">
    <property type="term" value="P:regulation of DNA-templated transcription"/>
    <property type="evidence" value="ECO:0007669"/>
    <property type="project" value="InterPro"/>
</dbReference>
<dbReference type="GO" id="GO:0043487">
    <property type="term" value="P:regulation of RNA stability"/>
    <property type="evidence" value="ECO:0007669"/>
    <property type="project" value="TreeGrafter"/>
</dbReference>
<dbReference type="GO" id="GO:0045974">
    <property type="term" value="P:regulation of translation, ncRNA-mediated"/>
    <property type="evidence" value="ECO:0007669"/>
    <property type="project" value="TreeGrafter"/>
</dbReference>
<dbReference type="CDD" id="cd01716">
    <property type="entry name" value="Hfq"/>
    <property type="match status" value="1"/>
</dbReference>
<dbReference type="FunFam" id="2.30.30.100:FF:000001">
    <property type="entry name" value="RNA-binding protein Hfq"/>
    <property type="match status" value="1"/>
</dbReference>
<dbReference type="Gene3D" id="2.30.30.100">
    <property type="match status" value="1"/>
</dbReference>
<dbReference type="HAMAP" id="MF_00436">
    <property type="entry name" value="Hfq"/>
    <property type="match status" value="1"/>
</dbReference>
<dbReference type="InterPro" id="IPR005001">
    <property type="entry name" value="Hfq"/>
</dbReference>
<dbReference type="InterPro" id="IPR010920">
    <property type="entry name" value="LSM_dom_sf"/>
</dbReference>
<dbReference type="InterPro" id="IPR047575">
    <property type="entry name" value="Sm"/>
</dbReference>
<dbReference type="NCBIfam" id="TIGR02383">
    <property type="entry name" value="Hfq"/>
    <property type="match status" value="1"/>
</dbReference>
<dbReference type="NCBIfam" id="NF001602">
    <property type="entry name" value="PRK00395.1"/>
    <property type="match status" value="1"/>
</dbReference>
<dbReference type="PANTHER" id="PTHR34772">
    <property type="entry name" value="RNA-BINDING PROTEIN HFQ"/>
    <property type="match status" value="1"/>
</dbReference>
<dbReference type="PANTHER" id="PTHR34772:SF1">
    <property type="entry name" value="RNA-BINDING PROTEIN HFQ"/>
    <property type="match status" value="1"/>
</dbReference>
<dbReference type="Pfam" id="PF17209">
    <property type="entry name" value="Hfq"/>
    <property type="match status" value="1"/>
</dbReference>
<dbReference type="SUPFAM" id="SSF50182">
    <property type="entry name" value="Sm-like ribonucleoproteins"/>
    <property type="match status" value="1"/>
</dbReference>
<dbReference type="PROSITE" id="PS52002">
    <property type="entry name" value="SM"/>
    <property type="match status" value="1"/>
</dbReference>
<comment type="function">
    <text evidence="1">RNA chaperone that binds small regulatory RNA (sRNAs) and mRNAs to facilitate mRNA translational regulation in response to envelope stress, environmental stress and changes in metabolite concentrations. Also binds with high specificity to tRNAs.</text>
</comment>
<comment type="subunit">
    <text evidence="1">Homohexamer.</text>
</comment>
<comment type="similarity">
    <text evidence="1">Belongs to the Hfq family.</text>
</comment>
<accession>A4SR25</accession>
<feature type="chain" id="PRO_1000025887" description="RNA-binding protein Hfq">
    <location>
        <begin position="1"/>
        <end position="87"/>
    </location>
</feature>
<feature type="domain" description="Sm" evidence="2">
    <location>
        <begin position="9"/>
        <end position="68"/>
    </location>
</feature>
<reference key="1">
    <citation type="journal article" date="2008" name="BMC Genomics">
        <title>The genome of Aeromonas salmonicida subsp. salmonicida A449: insights into the evolution of a fish pathogen.</title>
        <authorList>
            <person name="Reith M.E."/>
            <person name="Singh R.K."/>
            <person name="Curtis B."/>
            <person name="Boyd J.M."/>
            <person name="Bouevitch A."/>
            <person name="Kimball J."/>
            <person name="Munholland J."/>
            <person name="Murphy C."/>
            <person name="Sarty D."/>
            <person name="Williams J."/>
            <person name="Nash J.H."/>
            <person name="Johnson S.C."/>
            <person name="Brown L.L."/>
        </authorList>
    </citation>
    <scope>NUCLEOTIDE SEQUENCE [LARGE SCALE GENOMIC DNA]</scope>
    <source>
        <strain>A449</strain>
    </source>
</reference>
<protein>
    <recommendedName>
        <fullName evidence="1">RNA-binding protein Hfq</fullName>
    </recommendedName>
</protein>
<proteinExistence type="inferred from homology"/>
<name>HFQ_AERS4</name>
<organism>
    <name type="scientific">Aeromonas salmonicida (strain A449)</name>
    <dbReference type="NCBI Taxonomy" id="382245"/>
    <lineage>
        <taxon>Bacteria</taxon>
        <taxon>Pseudomonadati</taxon>
        <taxon>Pseudomonadota</taxon>
        <taxon>Gammaproteobacteria</taxon>
        <taxon>Aeromonadales</taxon>
        <taxon>Aeromonadaceae</taxon>
        <taxon>Aeromonas</taxon>
    </lineage>
</organism>